<gene>
    <name evidence="6" type="ORF">OG2516_04134</name>
</gene>
<organism evidence="6">
    <name type="scientific">Oceanicola granulosus (strain ATCC BAA-861 / DSM 15982 / KCTC 12143 / HTCC2516)</name>
    <dbReference type="NCBI Taxonomy" id="314256"/>
    <lineage>
        <taxon>Bacteria</taxon>
        <taxon>Pseudomonadati</taxon>
        <taxon>Pseudomonadota</taxon>
        <taxon>Alphaproteobacteria</taxon>
        <taxon>Rhodobacterales</taxon>
        <taxon>Roseobacteraceae</taxon>
        <taxon>Oceanicola</taxon>
    </lineage>
</organism>
<accession>Q2CEE2</accession>
<sequence length="206" mass="22238">MASEVVIRRATAADHGDLCRVCLLTGDSGRDASSREDDPTLLGMIYAVPYQVGAPDFAFVLEDAEGVCGYLLGAPDTLSFQHFLEKEWLPPLRAGLTDPGPDPAAWQGSDWARDAIHRPPALPPIDLAAYPAHGHIDLLPRAQGRGVGSRAMDHLEAALAAAGAPGMHLQVSPENPRALGFYEHRGFRELCRSEDEVVVGRRLLDE</sequence>
<feature type="chain" id="PRO_0000430933" description="Putative acetyltransferase OgpAT">
    <location>
        <begin position="1"/>
        <end position="206"/>
    </location>
</feature>
<feature type="domain" description="N-acetyltransferase" evidence="1">
    <location>
        <begin position="5"/>
        <end position="205"/>
    </location>
</feature>
<feature type="binding site" evidence="2">
    <location>
        <begin position="135"/>
        <end position="138"/>
    </location>
    <ligand>
        <name>acetyl-CoA</name>
        <dbReference type="ChEBI" id="CHEBI:57288"/>
    </ligand>
</feature>
<feature type="binding site" evidence="2">
    <location>
        <begin position="144"/>
        <end position="148"/>
    </location>
    <ligand>
        <name>acetyl-CoA</name>
        <dbReference type="ChEBI" id="CHEBI:57288"/>
    </ligand>
</feature>
<feature type="binding site" evidence="2">
    <location>
        <begin position="175"/>
        <end position="177"/>
    </location>
    <ligand>
        <name>acetyl-CoA</name>
        <dbReference type="ChEBI" id="CHEBI:57288"/>
    </ligand>
</feature>
<feature type="binding site" evidence="2">
    <location>
        <position position="184"/>
    </location>
    <ligand>
        <name>acetyl-CoA</name>
        <dbReference type="ChEBI" id="CHEBI:57288"/>
    </ligand>
</feature>
<feature type="mutagenesis site" description="Abolishes acetyl-CoA binding." evidence="2">
    <original>GRG</original>
    <variation>DPS</variation>
    <location>
        <begin position="144"/>
        <end position="146"/>
    </location>
</feature>
<feature type="strand" evidence="7">
    <location>
        <begin position="6"/>
        <end position="9"/>
    </location>
</feature>
<feature type="helix" evidence="7">
    <location>
        <begin position="12"/>
        <end position="14"/>
    </location>
</feature>
<feature type="helix" evidence="7">
    <location>
        <begin position="15"/>
        <end position="25"/>
    </location>
</feature>
<feature type="turn" evidence="7">
    <location>
        <begin position="33"/>
        <end position="35"/>
    </location>
</feature>
<feature type="helix" evidence="7">
    <location>
        <begin position="41"/>
        <end position="46"/>
    </location>
</feature>
<feature type="helix" evidence="7">
    <location>
        <begin position="48"/>
        <end position="53"/>
    </location>
</feature>
<feature type="helix" evidence="7">
    <location>
        <begin position="55"/>
        <end position="57"/>
    </location>
</feature>
<feature type="strand" evidence="7">
    <location>
        <begin position="58"/>
        <end position="63"/>
    </location>
</feature>
<feature type="strand" evidence="7">
    <location>
        <begin position="66"/>
        <end position="75"/>
    </location>
</feature>
<feature type="helix" evidence="7">
    <location>
        <begin position="77"/>
        <end position="87"/>
    </location>
</feature>
<feature type="helix" evidence="7">
    <location>
        <begin position="89"/>
        <end position="93"/>
    </location>
</feature>
<feature type="helix" evidence="7">
    <location>
        <begin position="110"/>
        <end position="117"/>
    </location>
</feature>
<feature type="turn" evidence="7">
    <location>
        <begin position="127"/>
        <end position="129"/>
    </location>
</feature>
<feature type="strand" evidence="7">
    <location>
        <begin position="132"/>
        <end position="138"/>
    </location>
</feature>
<feature type="helix" evidence="7">
    <location>
        <begin position="140"/>
        <end position="142"/>
    </location>
</feature>
<feature type="strand" evidence="7">
    <location>
        <begin position="144"/>
        <end position="146"/>
    </location>
</feature>
<feature type="helix" evidence="7">
    <location>
        <begin position="147"/>
        <end position="161"/>
    </location>
</feature>
<feature type="strand" evidence="7">
    <location>
        <begin position="166"/>
        <end position="171"/>
    </location>
</feature>
<feature type="helix" evidence="7">
    <location>
        <begin position="176"/>
        <end position="184"/>
    </location>
</feature>
<feature type="strand" evidence="7">
    <location>
        <begin position="188"/>
        <end position="192"/>
    </location>
</feature>
<feature type="strand" evidence="7">
    <location>
        <begin position="197"/>
        <end position="202"/>
    </location>
</feature>
<protein>
    <recommendedName>
        <fullName evidence="3">Putative acetyltransferase OgpAT</fullName>
        <shortName>OgpAT</shortName>
        <ecNumber>2.3.-.-</ecNumber>
    </recommendedName>
</protein>
<evidence type="ECO:0000255" key="1">
    <source>
        <dbReference type="PROSITE-ProRule" id="PRU00532"/>
    </source>
</evidence>
<evidence type="ECO:0000269" key="2">
    <source>
    </source>
</evidence>
<evidence type="ECO:0000303" key="3">
    <source>
    </source>
</evidence>
<evidence type="ECO:0000305" key="4"/>
<evidence type="ECO:0000305" key="5">
    <source>
    </source>
</evidence>
<evidence type="ECO:0000312" key="6">
    <source>
        <dbReference type="EMBL" id="EAR51055.1"/>
    </source>
</evidence>
<evidence type="ECO:0007829" key="7">
    <source>
        <dbReference type="PDB" id="3ZJ0"/>
    </source>
</evidence>
<reference evidence="6" key="1">
    <citation type="journal article" date="2010" name="J. Bacteriol.">
        <title>Genome sequences of Oceanicola granulosus HTCC2516(T) and Oceanicola batsensis HTCC2597(TDelta).</title>
        <authorList>
            <person name="Thrash J.C."/>
            <person name="Cho J.C."/>
            <person name="Vergin K.L."/>
            <person name="Giovannoni S.J."/>
        </authorList>
    </citation>
    <scope>NUCLEOTIDE SEQUENCE [LARGE SCALE GENOMIC DNA]</scope>
    <source>
        <strain evidence="6">ATCC BAA-861 / DSM 15982 / KCTC 12143 / HTCC2516</strain>
    </source>
</reference>
<reference key="2">
    <citation type="journal article" date="2013" name="Open Biol.">
        <title>Structure of a bacterial putative acetyltransferase defines the fold of the human O-GlcNAcase C-terminal domain.</title>
        <authorList>
            <person name="Rao F.V."/>
            <person name="Schuttelkopf A.W."/>
            <person name="Dorfmueller H.C."/>
            <person name="Ferenbach A.T."/>
            <person name="Navratilova I."/>
            <person name="van Aalten D.M."/>
        </authorList>
    </citation>
    <scope>X-RAY CRYSTALLOGRAPHY (1.80 ANGSTROMS) IN COMPLEX WITH ACETYL-COA</scope>
    <scope>FUNCTION</scope>
    <scope>SUBUNIT</scope>
    <scope>MUTAGENESIS OF 144-GLY--GLY-146</scope>
    <source>
        <strain evidence="3">ATCC BAA-861 / DSM 15982 / KCTC 12143 / HTCC2516</strain>
    </source>
</reference>
<dbReference type="EC" id="2.3.-.-"/>
<dbReference type="EMBL" id="AAOT01000018">
    <property type="protein sequence ID" value="EAR51055.1"/>
    <property type="molecule type" value="Genomic_DNA"/>
</dbReference>
<dbReference type="RefSeq" id="WP_007254355.1">
    <property type="nucleotide sequence ID" value="NZ_CH724107.1"/>
</dbReference>
<dbReference type="PDB" id="3ZJ0">
    <property type="method" value="X-ray"/>
    <property type="resolution" value="1.80 A"/>
    <property type="chains" value="A=1-206"/>
</dbReference>
<dbReference type="PDBsum" id="3ZJ0"/>
<dbReference type="SMR" id="Q2CEE2"/>
<dbReference type="STRING" id="314256.OG2516_04134"/>
<dbReference type="eggNOG" id="COG0456">
    <property type="taxonomic scope" value="Bacteria"/>
</dbReference>
<dbReference type="HOGENOM" id="CLU_086044_1_0_5"/>
<dbReference type="OrthoDB" id="8593648at2"/>
<dbReference type="EvolutionaryTrace" id="Q2CEE2"/>
<dbReference type="Proteomes" id="UP000003635">
    <property type="component" value="Unassembled WGS sequence"/>
</dbReference>
<dbReference type="GO" id="GO:0016747">
    <property type="term" value="F:acyltransferase activity, transferring groups other than amino-acyl groups"/>
    <property type="evidence" value="ECO:0007669"/>
    <property type="project" value="InterPro"/>
</dbReference>
<dbReference type="Gene3D" id="3.40.630.30">
    <property type="match status" value="1"/>
</dbReference>
<dbReference type="InterPro" id="IPR016181">
    <property type="entry name" value="Acyl_CoA_acyltransferase"/>
</dbReference>
<dbReference type="InterPro" id="IPR051822">
    <property type="entry name" value="Glycosyl_Hydrolase_84"/>
</dbReference>
<dbReference type="InterPro" id="IPR000182">
    <property type="entry name" value="GNAT_dom"/>
</dbReference>
<dbReference type="PANTHER" id="PTHR13170">
    <property type="entry name" value="O-GLCNACASE"/>
    <property type="match status" value="1"/>
</dbReference>
<dbReference type="PANTHER" id="PTHR13170:SF16">
    <property type="entry name" value="PROTEIN O-GLCNACASE"/>
    <property type="match status" value="1"/>
</dbReference>
<dbReference type="Pfam" id="PF00583">
    <property type="entry name" value="Acetyltransf_1"/>
    <property type="match status" value="1"/>
</dbReference>
<dbReference type="SUPFAM" id="SSF55729">
    <property type="entry name" value="Acyl-CoA N-acyltransferases (Nat)"/>
    <property type="match status" value="1"/>
</dbReference>
<dbReference type="PROSITE" id="PS51186">
    <property type="entry name" value="GNAT"/>
    <property type="match status" value="1"/>
</dbReference>
<proteinExistence type="evidence at protein level"/>
<comment type="function">
    <text evidence="2">Binds acetyl-CoA, but not butyryl-CoA or decanoyl-CoA. May have acetyltransferase activity.</text>
</comment>
<comment type="subunit">
    <text evidence="5">Monomer.</text>
</comment>
<comment type="similarity">
    <text evidence="4">Belongs to the acetyltransferase family.</text>
</comment>
<name>AT_OCEGH</name>
<keyword id="KW-0002">3D-structure</keyword>
<keyword id="KW-1185">Reference proteome</keyword>
<keyword id="KW-0808">Transferase</keyword>